<sequence length="159" mass="18759">MIDSDGFRPNVGIILANEAGQVLWARRINQEAWQFPQGGINDRETPEEALYRELNEEVGLEAGDVRILACTRGWLRYRLPQRLVRTHSQPLCIGQKQKWFLLRLMSDEARVRMDITSKPEFDGWRWVSYWYPLGQVVTFKREVYRRALKELAPRLLARD</sequence>
<evidence type="ECO:0000255" key="1">
    <source>
        <dbReference type="HAMAP-Rule" id="MF_00298"/>
    </source>
</evidence>
<gene>
    <name evidence="1" type="primary">rppH</name>
    <name evidence="1" type="synonym">nudH</name>
    <name type="ordered locus">PA0336</name>
</gene>
<keyword id="KW-0378">Hydrolase</keyword>
<keyword id="KW-1185">Reference proteome</keyword>
<organism>
    <name type="scientific">Pseudomonas aeruginosa (strain ATCC 15692 / DSM 22644 / CIP 104116 / JCM 14847 / LMG 12228 / 1C / PRS 101 / PAO1)</name>
    <dbReference type="NCBI Taxonomy" id="208964"/>
    <lineage>
        <taxon>Bacteria</taxon>
        <taxon>Pseudomonadati</taxon>
        <taxon>Pseudomonadota</taxon>
        <taxon>Gammaproteobacteria</taxon>
        <taxon>Pseudomonadales</taxon>
        <taxon>Pseudomonadaceae</taxon>
        <taxon>Pseudomonas</taxon>
    </lineage>
</organism>
<dbReference type="EC" id="3.6.1.-" evidence="1"/>
<dbReference type="EMBL" id="AF116285">
    <property type="protein sequence ID" value="AAD22458.1"/>
    <property type="molecule type" value="Genomic_DNA"/>
</dbReference>
<dbReference type="EMBL" id="AE004091">
    <property type="protein sequence ID" value="AAG03725.1"/>
    <property type="molecule type" value="Genomic_DNA"/>
</dbReference>
<dbReference type="PIR" id="C83604">
    <property type="entry name" value="C83604"/>
</dbReference>
<dbReference type="RefSeq" id="WP_003084400.1">
    <property type="nucleotide sequence ID" value="NZ_QZGE01000016.1"/>
</dbReference>
<dbReference type="SMR" id="Q9X4P2"/>
<dbReference type="FunCoup" id="Q9X4P2">
    <property type="interactions" value="301"/>
</dbReference>
<dbReference type="STRING" id="208964.PA0336"/>
<dbReference type="PaxDb" id="208964-PA0336"/>
<dbReference type="KEGG" id="pae:PA0336"/>
<dbReference type="PATRIC" id="fig|208964.12.peg.354"/>
<dbReference type="PseudoCAP" id="PA0336"/>
<dbReference type="HOGENOM" id="CLU_087195_3_1_6"/>
<dbReference type="InParanoid" id="Q9X4P2"/>
<dbReference type="OrthoDB" id="9816040at2"/>
<dbReference type="PhylomeDB" id="Q9X4P2"/>
<dbReference type="BioCyc" id="PAER208964:G1FZ6-339-MONOMER"/>
<dbReference type="PHI-base" id="PHI:7474"/>
<dbReference type="Proteomes" id="UP000002438">
    <property type="component" value="Chromosome"/>
</dbReference>
<dbReference type="GO" id="GO:0005737">
    <property type="term" value="C:cytoplasm"/>
    <property type="evidence" value="ECO:0000318"/>
    <property type="project" value="GO_Central"/>
</dbReference>
<dbReference type="GO" id="GO:0034353">
    <property type="term" value="F:mRNA 5'-diphosphatase activity"/>
    <property type="evidence" value="ECO:0000315"/>
    <property type="project" value="PseudoCAP"/>
</dbReference>
<dbReference type="GO" id="GO:0006402">
    <property type="term" value="P:mRNA catabolic process"/>
    <property type="evidence" value="ECO:0000318"/>
    <property type="project" value="GO_Central"/>
</dbReference>
<dbReference type="CDD" id="cd03671">
    <property type="entry name" value="NUDIX_Ap4A_hydrolase_plant_like"/>
    <property type="match status" value="1"/>
</dbReference>
<dbReference type="FunFam" id="3.90.79.10:FF:000001">
    <property type="entry name" value="RNA pyrophosphohydrolase"/>
    <property type="match status" value="1"/>
</dbReference>
<dbReference type="Gene3D" id="3.90.79.10">
    <property type="entry name" value="Nucleoside Triphosphate Pyrophosphohydrolase"/>
    <property type="match status" value="1"/>
</dbReference>
<dbReference type="HAMAP" id="MF_00298">
    <property type="entry name" value="Nudix_RppH"/>
    <property type="match status" value="1"/>
</dbReference>
<dbReference type="InterPro" id="IPR020476">
    <property type="entry name" value="Nudix_hydrolase"/>
</dbReference>
<dbReference type="InterPro" id="IPR015797">
    <property type="entry name" value="NUDIX_hydrolase-like_dom_sf"/>
</dbReference>
<dbReference type="InterPro" id="IPR020084">
    <property type="entry name" value="NUDIX_hydrolase_CS"/>
</dbReference>
<dbReference type="InterPro" id="IPR000086">
    <property type="entry name" value="NUDIX_hydrolase_dom"/>
</dbReference>
<dbReference type="InterPro" id="IPR022927">
    <property type="entry name" value="RppH"/>
</dbReference>
<dbReference type="NCBIfam" id="NF001934">
    <property type="entry name" value="PRK00714.1-1"/>
    <property type="match status" value="1"/>
</dbReference>
<dbReference type="NCBIfam" id="NF001937">
    <property type="entry name" value="PRK00714.1-4"/>
    <property type="match status" value="1"/>
</dbReference>
<dbReference type="NCBIfam" id="NF001938">
    <property type="entry name" value="PRK00714.1-5"/>
    <property type="match status" value="1"/>
</dbReference>
<dbReference type="PANTHER" id="PTHR23114">
    <property type="entry name" value="M7GPPPN-MRNA HYDROLASE"/>
    <property type="match status" value="1"/>
</dbReference>
<dbReference type="PANTHER" id="PTHR23114:SF17">
    <property type="entry name" value="M7GPPPN-MRNA HYDROLASE"/>
    <property type="match status" value="1"/>
</dbReference>
<dbReference type="Pfam" id="PF00293">
    <property type="entry name" value="NUDIX"/>
    <property type="match status" value="1"/>
</dbReference>
<dbReference type="PRINTS" id="PR00502">
    <property type="entry name" value="NUDIXFAMILY"/>
</dbReference>
<dbReference type="SUPFAM" id="SSF55811">
    <property type="entry name" value="Nudix"/>
    <property type="match status" value="1"/>
</dbReference>
<dbReference type="PROSITE" id="PS51462">
    <property type="entry name" value="NUDIX"/>
    <property type="match status" value="1"/>
</dbReference>
<dbReference type="PROSITE" id="PS00893">
    <property type="entry name" value="NUDIX_BOX"/>
    <property type="match status" value="1"/>
</dbReference>
<reference key="1">
    <citation type="journal article" date="1999" name="Proc. Natl. Acad. Sci. U.S.A.">
        <title>Pseudomonas aeruginosa killing of Caenorhabditis elegans used to identify P. aeruginosa virulence factors.</title>
        <authorList>
            <person name="Tan M.-W."/>
            <person name="Rahme L.G."/>
            <person name="Sternberg J.A."/>
            <person name="Tompkins R.G."/>
            <person name="Ausubel F.M."/>
        </authorList>
    </citation>
    <scope>NUCLEOTIDE SEQUENCE [GENOMIC DNA]</scope>
    <source>
        <strain>PA14</strain>
    </source>
</reference>
<reference key="2">
    <citation type="journal article" date="2000" name="Nature">
        <title>Complete genome sequence of Pseudomonas aeruginosa PAO1, an opportunistic pathogen.</title>
        <authorList>
            <person name="Stover C.K."/>
            <person name="Pham X.-Q.T."/>
            <person name="Erwin A.L."/>
            <person name="Mizoguchi S.D."/>
            <person name="Warrener P."/>
            <person name="Hickey M.J."/>
            <person name="Brinkman F.S.L."/>
            <person name="Hufnagle W.O."/>
            <person name="Kowalik D.J."/>
            <person name="Lagrou M."/>
            <person name="Garber R.L."/>
            <person name="Goltry L."/>
            <person name="Tolentino E."/>
            <person name="Westbrock-Wadman S."/>
            <person name="Yuan Y."/>
            <person name="Brody L.L."/>
            <person name="Coulter S.N."/>
            <person name="Folger K.R."/>
            <person name="Kas A."/>
            <person name="Larbig K."/>
            <person name="Lim R.M."/>
            <person name="Smith K.A."/>
            <person name="Spencer D.H."/>
            <person name="Wong G.K.-S."/>
            <person name="Wu Z."/>
            <person name="Paulsen I.T."/>
            <person name="Reizer J."/>
            <person name="Saier M.H. Jr."/>
            <person name="Hancock R.E.W."/>
            <person name="Lory S."/>
            <person name="Olson M.V."/>
        </authorList>
    </citation>
    <scope>NUCLEOTIDE SEQUENCE [LARGE SCALE GENOMIC DNA]</scope>
    <source>
        <strain>ATCC 15692 / DSM 22644 / CIP 104116 / JCM 14847 / LMG 12228 / 1C / PRS 101 / PAO1</strain>
    </source>
</reference>
<protein>
    <recommendedName>
        <fullName evidence="1">RNA pyrophosphohydrolase</fullName>
        <ecNumber evidence="1">3.6.1.-</ecNumber>
    </recommendedName>
    <alternativeName>
        <fullName evidence="1">(Di)nucleoside polyphosphate hydrolase</fullName>
    </alternativeName>
</protein>
<accession>Q9X4P2</accession>
<name>RPPH_PSEAE</name>
<feature type="chain" id="PRO_0000057017" description="RNA pyrophosphohydrolase">
    <location>
        <begin position="1"/>
        <end position="159"/>
    </location>
</feature>
<feature type="domain" description="Nudix hydrolase" evidence="1">
    <location>
        <begin position="6"/>
        <end position="149"/>
    </location>
</feature>
<feature type="short sequence motif" description="Nudix box">
    <location>
        <begin position="38"/>
        <end position="59"/>
    </location>
</feature>
<proteinExistence type="inferred from homology"/>
<comment type="function">
    <text evidence="1">Accelerates the degradation of transcripts by removing pyrophosphate from the 5'-end of triphosphorylated RNA, leading to a more labile monophosphorylated state that can stimulate subsequent ribonuclease cleavage.</text>
</comment>
<comment type="cofactor">
    <cofactor evidence="1">
        <name>a divalent metal cation</name>
        <dbReference type="ChEBI" id="CHEBI:60240"/>
    </cofactor>
</comment>
<comment type="similarity">
    <text evidence="1">Belongs to the Nudix hydrolase family. RppH subfamily.</text>
</comment>